<evidence type="ECO:0000250" key="1"/>
<evidence type="ECO:0000250" key="2">
    <source>
        <dbReference type="UniProtKB" id="Q8WUP2"/>
    </source>
</evidence>
<evidence type="ECO:0000255" key="3">
    <source>
        <dbReference type="PROSITE-ProRule" id="PRU00125"/>
    </source>
</evidence>
<evidence type="ECO:0000256" key="4">
    <source>
        <dbReference type="SAM" id="MobiDB-lite"/>
    </source>
</evidence>
<feature type="chain" id="PRO_0000265104" description="Filamin-binding LIM protein 1">
    <location>
        <begin position="1"/>
        <end position="378"/>
    </location>
</feature>
<feature type="domain" description="LIM zinc-binding 1" evidence="3">
    <location>
        <begin position="186"/>
        <end position="247"/>
    </location>
</feature>
<feature type="domain" description="LIM zinc-binding 2" evidence="3">
    <location>
        <begin position="248"/>
        <end position="305"/>
    </location>
</feature>
<feature type="domain" description="LIM zinc-binding 3" evidence="3">
    <location>
        <begin position="306"/>
        <end position="375"/>
    </location>
</feature>
<feature type="region of interest" description="Filamin-binding" evidence="1">
    <location>
        <begin position="1"/>
        <end position="69"/>
    </location>
</feature>
<feature type="region of interest" description="Disordered" evidence="4">
    <location>
        <begin position="38"/>
        <end position="179"/>
    </location>
</feature>
<feature type="region of interest" description="PLEKHC1-binding" evidence="1">
    <location>
        <begin position="281"/>
        <end position="378"/>
    </location>
</feature>
<feature type="compositionally biased region" description="Pro residues" evidence="4">
    <location>
        <begin position="103"/>
        <end position="115"/>
    </location>
</feature>
<gene>
    <name type="primary">FBLIM1</name>
</gene>
<dbReference type="EMBL" id="BC116079">
    <property type="protein sequence ID" value="AAI16080.1"/>
    <property type="molecule type" value="mRNA"/>
</dbReference>
<dbReference type="RefSeq" id="NP_001070423.1">
    <property type="nucleotide sequence ID" value="NM_001076955.1"/>
</dbReference>
<dbReference type="RefSeq" id="XP_005217193.1">
    <property type="nucleotide sequence ID" value="XM_005217136.5"/>
</dbReference>
<dbReference type="RefSeq" id="XP_005217194.1">
    <property type="nucleotide sequence ID" value="XM_005217137.5"/>
</dbReference>
<dbReference type="RefSeq" id="XP_024832294.1">
    <property type="nucleotide sequence ID" value="XM_024976526.2"/>
</dbReference>
<dbReference type="RefSeq" id="XP_024832295.1">
    <property type="nucleotide sequence ID" value="XM_024976527.2"/>
</dbReference>
<dbReference type="FunCoup" id="Q1JQB5">
    <property type="interactions" value="380"/>
</dbReference>
<dbReference type="STRING" id="9913.ENSBTAP00000056771"/>
<dbReference type="PaxDb" id="9913-ENSBTAP00000024926"/>
<dbReference type="GeneID" id="767833"/>
<dbReference type="KEGG" id="bta:767833"/>
<dbReference type="CTD" id="54751"/>
<dbReference type="VEuPathDB" id="HostDB:ENSBTAG00000018725"/>
<dbReference type="eggNOG" id="KOG1701">
    <property type="taxonomic scope" value="Eukaryota"/>
</dbReference>
<dbReference type="HOGENOM" id="CLU_062552_0_0_1"/>
<dbReference type="InParanoid" id="Q1JQB5"/>
<dbReference type="OMA" id="CEVCVIQ"/>
<dbReference type="OrthoDB" id="25414at2759"/>
<dbReference type="TreeFam" id="TF320310"/>
<dbReference type="Reactome" id="R-BTA-446353">
    <property type="pathway name" value="Cell-extracellular matrix interactions"/>
</dbReference>
<dbReference type="Proteomes" id="UP000009136">
    <property type="component" value="Chromosome 16"/>
</dbReference>
<dbReference type="Bgee" id="ENSBTAG00000018725">
    <property type="expression patterns" value="Expressed in trachea and 105 other cell types or tissues"/>
</dbReference>
<dbReference type="GO" id="GO:0005737">
    <property type="term" value="C:cytoplasm"/>
    <property type="evidence" value="ECO:0007669"/>
    <property type="project" value="UniProtKB-KW"/>
</dbReference>
<dbReference type="GO" id="GO:0005925">
    <property type="term" value="C:focal adhesion"/>
    <property type="evidence" value="ECO:0000318"/>
    <property type="project" value="GO_Central"/>
</dbReference>
<dbReference type="GO" id="GO:0001725">
    <property type="term" value="C:stress fiber"/>
    <property type="evidence" value="ECO:0000250"/>
    <property type="project" value="UniProtKB"/>
</dbReference>
<dbReference type="GO" id="GO:0031005">
    <property type="term" value="F:filamin binding"/>
    <property type="evidence" value="ECO:0000250"/>
    <property type="project" value="UniProtKB"/>
</dbReference>
<dbReference type="GO" id="GO:0046872">
    <property type="term" value="F:metal ion binding"/>
    <property type="evidence" value="ECO:0007669"/>
    <property type="project" value="UniProtKB-KW"/>
</dbReference>
<dbReference type="GO" id="GO:0098609">
    <property type="term" value="P:cell-cell adhesion"/>
    <property type="evidence" value="ECO:0000250"/>
    <property type="project" value="UniProtKB"/>
</dbReference>
<dbReference type="GO" id="GO:0008360">
    <property type="term" value="P:regulation of cell shape"/>
    <property type="evidence" value="ECO:0007669"/>
    <property type="project" value="UniProtKB-KW"/>
</dbReference>
<dbReference type="GO" id="GO:0033623">
    <property type="term" value="P:regulation of integrin activation"/>
    <property type="evidence" value="ECO:0000250"/>
    <property type="project" value="UniProtKB"/>
</dbReference>
<dbReference type="CDD" id="cd09372">
    <property type="entry name" value="LIM2_FBLP-1"/>
    <property type="match status" value="1"/>
</dbReference>
<dbReference type="FunFam" id="2.10.110.10:FF:000086">
    <property type="entry name" value="Filamin binding LIM protein 1"/>
    <property type="match status" value="1"/>
</dbReference>
<dbReference type="FunFam" id="2.10.110.10:FF:000088">
    <property type="entry name" value="Filamin binding LIM protein 1"/>
    <property type="match status" value="1"/>
</dbReference>
<dbReference type="FunFam" id="2.10.110.10:FF:000097">
    <property type="entry name" value="Filamin-binding LIM protein 1"/>
    <property type="match status" value="1"/>
</dbReference>
<dbReference type="Gene3D" id="2.10.110.10">
    <property type="entry name" value="Cysteine Rich Protein"/>
    <property type="match status" value="3"/>
</dbReference>
<dbReference type="InterPro" id="IPR001781">
    <property type="entry name" value="Znf_LIM"/>
</dbReference>
<dbReference type="PANTHER" id="PTHR24207:SF1">
    <property type="entry name" value="FILAMIN-BINDING LIM PROTEIN 1"/>
    <property type="match status" value="1"/>
</dbReference>
<dbReference type="PANTHER" id="PTHR24207">
    <property type="entry name" value="ZYX102 PROTEIN"/>
    <property type="match status" value="1"/>
</dbReference>
<dbReference type="Pfam" id="PF00412">
    <property type="entry name" value="LIM"/>
    <property type="match status" value="3"/>
</dbReference>
<dbReference type="SMART" id="SM00132">
    <property type="entry name" value="LIM"/>
    <property type="match status" value="3"/>
</dbReference>
<dbReference type="SUPFAM" id="SSF57716">
    <property type="entry name" value="Glucocorticoid receptor-like (DNA-binding domain)"/>
    <property type="match status" value="2"/>
</dbReference>
<dbReference type="PROSITE" id="PS00478">
    <property type="entry name" value="LIM_DOMAIN_1"/>
    <property type="match status" value="3"/>
</dbReference>
<dbReference type="PROSITE" id="PS50023">
    <property type="entry name" value="LIM_DOMAIN_2"/>
    <property type="match status" value="3"/>
</dbReference>
<reference key="1">
    <citation type="submission" date="2006-05" db="EMBL/GenBank/DDBJ databases">
        <authorList>
            <consortium name="NIH - Mammalian Gene Collection (MGC) project"/>
        </authorList>
    </citation>
    <scope>NUCLEOTIDE SEQUENCE [LARGE SCALE MRNA]</scope>
    <source>
        <strain>Hereford</strain>
        <tissue>Ascending colon</tissue>
    </source>
</reference>
<comment type="function">
    <text evidence="1">Serves as an anchoring site for cell-ECM adhesion proteins and filamin-containing actin filaments. Is implicated in cell shape modulation (spreading) and motility. May participate in the regulation of filamin-mediated cross-linking and stabilization of actin filaments. May also regulate the assembly of filamin-containing signaling complexes that control actin assembly. Promotes dissociation of FLNA from ITGB3 and ITGB7. Promotes activation of integrins and regulates integrin-mediated cell-cell adhesion (By similarity).</text>
</comment>
<comment type="subunit">
    <text evidence="1">Interacts with PLEKHC1, FLNA, FLNB and FLNC. Interacts with NKX2-5.</text>
</comment>
<comment type="subcellular location">
    <subcellularLocation>
        <location evidence="2">Cell junction</location>
        <location evidence="2">Focal adhesion</location>
    </subcellularLocation>
    <subcellularLocation>
        <location evidence="2">Cytoplasm</location>
        <location evidence="2">Cytoskeleton</location>
        <location evidence="2">Stress fiber</location>
    </subcellularLocation>
    <text evidence="2">Associated with actin stress fiber at cell-ECM focal adhesion sites. Recruited and localized at actin stress fibers and clustered at cell-EMC adhesion sites through interaction with FERMT2.</text>
</comment>
<organism>
    <name type="scientific">Bos taurus</name>
    <name type="common">Bovine</name>
    <dbReference type="NCBI Taxonomy" id="9913"/>
    <lineage>
        <taxon>Eukaryota</taxon>
        <taxon>Metazoa</taxon>
        <taxon>Chordata</taxon>
        <taxon>Craniata</taxon>
        <taxon>Vertebrata</taxon>
        <taxon>Euteleostomi</taxon>
        <taxon>Mammalia</taxon>
        <taxon>Eutheria</taxon>
        <taxon>Laurasiatheria</taxon>
        <taxon>Artiodactyla</taxon>
        <taxon>Ruminantia</taxon>
        <taxon>Pecora</taxon>
        <taxon>Bovidae</taxon>
        <taxon>Bovinae</taxon>
        <taxon>Bos</taxon>
    </lineage>
</organism>
<name>FBLI1_BOVIN</name>
<accession>Q1JQB5</accession>
<sequence length="378" mass="41497">MASKPEKRVASSVFITLVPPRRDEAVVEEVRRAACEAWPGRPWESAPTKAPGAGSVGKLRSWMPPGRAAAPGPAVPPQLSNGGCSLPPPPLDVDDALPDLDLLPPPPPPPAADLPPPDEEPHSAMGASLISDLEQLHLPPPPPPPQALVEGPPLQPRPSHLKPAEEELPPPPEEPVSFPEREASTDICAFCHKTVSPRELAVEAMKRQYHAQCFTCRVCRRQLAGQSFYQKDGRPLCEPCYQDTLEKCGKCGEVVREHIIRALGQAFHPSCFTCVTCARRIGDESFALDSQNEVYCLDDFYRKFAPVCSICENPIIPRDGKDAFKIECMGRNFHENCYRCEDCRVLLSVEPTDQGCYPLNNRLFCKPCHVKRSAAGCC</sequence>
<protein>
    <recommendedName>
        <fullName>Filamin-binding LIM protein 1</fullName>
        <shortName>FBLP-1</shortName>
    </recommendedName>
</protein>
<proteinExistence type="evidence at transcript level"/>
<keyword id="KW-0130">Cell adhesion</keyword>
<keyword id="KW-0965">Cell junction</keyword>
<keyword id="KW-0133">Cell shape</keyword>
<keyword id="KW-0963">Cytoplasm</keyword>
<keyword id="KW-0206">Cytoskeleton</keyword>
<keyword id="KW-0440">LIM domain</keyword>
<keyword id="KW-0479">Metal-binding</keyword>
<keyword id="KW-1185">Reference proteome</keyword>
<keyword id="KW-0677">Repeat</keyword>
<keyword id="KW-0862">Zinc</keyword>